<reference key="1">
    <citation type="submission" date="2005-08" db="EMBL/GenBank/DDBJ databases">
        <authorList>
            <consortium name="NIH - Mammalian Gene Collection (MGC) project"/>
        </authorList>
    </citation>
    <scope>NUCLEOTIDE SEQUENCE [LARGE SCALE MRNA]</scope>
    <source>
        <strain>Crossbred X Angus</strain>
        <tissue>Liver</tissue>
    </source>
</reference>
<gene>
    <name type="primary">PSMC4</name>
</gene>
<keyword id="KW-0007">Acetylation</keyword>
<keyword id="KW-0067">ATP-binding</keyword>
<keyword id="KW-0963">Cytoplasm</keyword>
<keyword id="KW-0547">Nucleotide-binding</keyword>
<keyword id="KW-0539">Nucleus</keyword>
<keyword id="KW-0597">Phosphoprotein</keyword>
<keyword id="KW-0647">Proteasome</keyword>
<keyword id="KW-1185">Reference proteome</keyword>
<dbReference type="EMBL" id="BC102595">
    <property type="protein sequence ID" value="AAI02596.1"/>
    <property type="molecule type" value="mRNA"/>
</dbReference>
<dbReference type="RefSeq" id="NP_001030255.1">
    <property type="nucleotide sequence ID" value="NM_001035083.1"/>
</dbReference>
<dbReference type="SMR" id="Q3T030"/>
<dbReference type="FunCoup" id="Q3T030">
    <property type="interactions" value="4619"/>
</dbReference>
<dbReference type="STRING" id="9913.ENSBTAP00000012391"/>
<dbReference type="PaxDb" id="9913-ENSBTAP00000012391"/>
<dbReference type="PeptideAtlas" id="Q3T030"/>
<dbReference type="Ensembl" id="ENSBTAT00000012391.7">
    <property type="protein sequence ID" value="ENSBTAP00000012391.6"/>
    <property type="gene ID" value="ENSBTAG00000009414.7"/>
</dbReference>
<dbReference type="GeneID" id="510029"/>
<dbReference type="KEGG" id="bta:510029"/>
<dbReference type="CTD" id="5704"/>
<dbReference type="VEuPathDB" id="HostDB:ENSBTAG00000009414"/>
<dbReference type="VGNC" id="VGNC:33458">
    <property type="gene designation" value="PSMC4"/>
</dbReference>
<dbReference type="eggNOG" id="KOG0727">
    <property type="taxonomic scope" value="Eukaryota"/>
</dbReference>
<dbReference type="GeneTree" id="ENSGT01020000230346"/>
<dbReference type="HOGENOM" id="CLU_000688_2_0_1"/>
<dbReference type="InParanoid" id="Q3T030"/>
<dbReference type="OMA" id="QDIGGMD"/>
<dbReference type="OrthoDB" id="10255768at2759"/>
<dbReference type="Reactome" id="R-BTA-1169091">
    <property type="pathway name" value="Activation of NF-kappaB in B cells"/>
</dbReference>
<dbReference type="Reactome" id="R-BTA-1234176">
    <property type="pathway name" value="Oxygen-dependent proline hydroxylation of Hypoxia-inducible Factor Alpha"/>
</dbReference>
<dbReference type="Reactome" id="R-BTA-1236978">
    <property type="pathway name" value="Cross-presentation of soluble exogenous antigens (endosomes)"/>
</dbReference>
<dbReference type="Reactome" id="R-BTA-174084">
    <property type="pathway name" value="Autodegradation of Cdh1 by Cdh1:APC/C"/>
</dbReference>
<dbReference type="Reactome" id="R-BTA-174154">
    <property type="pathway name" value="APC/C:Cdc20 mediated degradation of Securin"/>
</dbReference>
<dbReference type="Reactome" id="R-BTA-174178">
    <property type="pathway name" value="APC/C:Cdh1 mediated degradation of Cdc20 and other APC/C:Cdh1 targeted proteins in late mitosis/early G1"/>
</dbReference>
<dbReference type="Reactome" id="R-BTA-174184">
    <property type="pathway name" value="Cdc20:Phospho-APC/C mediated degradation of Cyclin A"/>
</dbReference>
<dbReference type="Reactome" id="R-BTA-187577">
    <property type="pathway name" value="SCF(Skp2)-mediated degradation of p27/p21"/>
</dbReference>
<dbReference type="Reactome" id="R-BTA-195253">
    <property type="pathway name" value="Degradation of beta-catenin by the destruction complex"/>
</dbReference>
<dbReference type="Reactome" id="R-BTA-202424">
    <property type="pathway name" value="Downstream TCR signaling"/>
</dbReference>
<dbReference type="Reactome" id="R-BTA-2467813">
    <property type="pathway name" value="Separation of Sister Chromatids"/>
</dbReference>
<dbReference type="Reactome" id="R-BTA-2871837">
    <property type="pathway name" value="FCERI mediated NF-kB activation"/>
</dbReference>
<dbReference type="Reactome" id="R-BTA-349425">
    <property type="pathway name" value="Autodegradation of the E3 ubiquitin ligase COP1"/>
</dbReference>
<dbReference type="Reactome" id="R-BTA-350562">
    <property type="pathway name" value="Regulation of ornithine decarboxylase (ODC)"/>
</dbReference>
<dbReference type="Reactome" id="R-BTA-382556">
    <property type="pathway name" value="ABC-family proteins mediated transport"/>
</dbReference>
<dbReference type="Reactome" id="R-BTA-450408">
    <property type="pathway name" value="AUF1 (hnRNP D0) binds and destabilizes mRNA"/>
</dbReference>
<dbReference type="Reactome" id="R-BTA-4608870">
    <property type="pathway name" value="Asymmetric localization of PCP proteins"/>
</dbReference>
<dbReference type="Reactome" id="R-BTA-4641257">
    <property type="pathway name" value="Degradation of AXIN"/>
</dbReference>
<dbReference type="Reactome" id="R-BTA-4641258">
    <property type="pathway name" value="Degradation of DVL"/>
</dbReference>
<dbReference type="Reactome" id="R-BTA-5358346">
    <property type="pathway name" value="Hedgehog ligand biogenesis"/>
</dbReference>
<dbReference type="Reactome" id="R-BTA-5607761">
    <property type="pathway name" value="Dectin-1 mediated noncanonical NF-kB signaling"/>
</dbReference>
<dbReference type="Reactome" id="R-BTA-5607764">
    <property type="pathway name" value="CLEC7A (Dectin-1) signaling"/>
</dbReference>
<dbReference type="Reactome" id="R-BTA-5610780">
    <property type="pathway name" value="Degradation of GLI1 by the proteasome"/>
</dbReference>
<dbReference type="Reactome" id="R-BTA-5610785">
    <property type="pathway name" value="GLI3 is processed to GLI3R by the proteasome"/>
</dbReference>
<dbReference type="Reactome" id="R-BTA-5632684">
    <property type="pathway name" value="Hedgehog 'on' state"/>
</dbReference>
<dbReference type="Reactome" id="R-BTA-5668541">
    <property type="pathway name" value="TNFR2 non-canonical NF-kB pathway"/>
</dbReference>
<dbReference type="Reactome" id="R-BTA-5676590">
    <property type="pathway name" value="NIK--&gt;noncanonical NF-kB signaling"/>
</dbReference>
<dbReference type="Reactome" id="R-BTA-5687128">
    <property type="pathway name" value="MAPK6/MAPK4 signaling"/>
</dbReference>
<dbReference type="Reactome" id="R-BTA-5689603">
    <property type="pathway name" value="UCH proteinases"/>
</dbReference>
<dbReference type="Reactome" id="R-BTA-5689880">
    <property type="pathway name" value="Ub-specific processing proteases"/>
</dbReference>
<dbReference type="Reactome" id="R-BTA-68867">
    <property type="pathway name" value="Assembly of the pre-replicative complex"/>
</dbReference>
<dbReference type="Reactome" id="R-BTA-68949">
    <property type="pathway name" value="Orc1 removal from chromatin"/>
</dbReference>
<dbReference type="Reactome" id="R-BTA-69017">
    <property type="pathway name" value="CDK-mediated phosphorylation and removal of Cdc6"/>
</dbReference>
<dbReference type="Reactome" id="R-BTA-69481">
    <property type="pathway name" value="G2/M Checkpoints"/>
</dbReference>
<dbReference type="Reactome" id="R-BTA-69601">
    <property type="pathway name" value="Ubiquitin Mediated Degradation of Phosphorylated Cdc25A"/>
</dbReference>
<dbReference type="Reactome" id="R-BTA-75815">
    <property type="pathway name" value="Ubiquitin-dependent degradation of Cyclin D"/>
</dbReference>
<dbReference type="Reactome" id="R-BTA-8852276">
    <property type="pathway name" value="The role of GTSE1 in G2/M progression after G2 checkpoint"/>
</dbReference>
<dbReference type="Reactome" id="R-BTA-8854050">
    <property type="pathway name" value="FBXL7 down-regulates AURKA during mitotic entry and in early mitosis"/>
</dbReference>
<dbReference type="Reactome" id="R-BTA-8939236">
    <property type="pathway name" value="RUNX1 regulates transcription of genes involved in differentiation of HSCs"/>
</dbReference>
<dbReference type="Reactome" id="R-BTA-8939902">
    <property type="pathway name" value="Regulation of RUNX2 expression and activity"/>
</dbReference>
<dbReference type="Reactome" id="R-BTA-8941858">
    <property type="pathway name" value="Regulation of RUNX3 expression and activity"/>
</dbReference>
<dbReference type="Reactome" id="R-BTA-8948751">
    <property type="pathway name" value="Regulation of PTEN stability and activity"/>
</dbReference>
<dbReference type="Reactome" id="R-BTA-8951664">
    <property type="pathway name" value="Neddylation"/>
</dbReference>
<dbReference type="Reactome" id="R-BTA-9020702">
    <property type="pathway name" value="Interleukin-1 signaling"/>
</dbReference>
<dbReference type="Reactome" id="R-BTA-9755511">
    <property type="pathway name" value="KEAP1-NFE2L2 pathway"/>
</dbReference>
<dbReference type="Reactome" id="R-BTA-9762114">
    <property type="pathway name" value="GSK3B and BTRC:CUL1-mediated-degradation of NFE2L2"/>
</dbReference>
<dbReference type="Reactome" id="R-BTA-983168">
    <property type="pathway name" value="Antigen processing: Ubiquitination &amp; Proteasome degradation"/>
</dbReference>
<dbReference type="Reactome" id="R-BTA-9907900">
    <property type="pathway name" value="Proteasome assembly"/>
</dbReference>
<dbReference type="Proteomes" id="UP000009136">
    <property type="component" value="Chromosome 18"/>
</dbReference>
<dbReference type="Bgee" id="ENSBTAG00000009414">
    <property type="expression patterns" value="Expressed in retina and 104 other cell types or tissues"/>
</dbReference>
<dbReference type="GO" id="GO:0036064">
    <property type="term" value="C:ciliary basal body"/>
    <property type="evidence" value="ECO:0007669"/>
    <property type="project" value="Ensembl"/>
</dbReference>
<dbReference type="GO" id="GO:0005829">
    <property type="term" value="C:cytosol"/>
    <property type="evidence" value="ECO:0000304"/>
    <property type="project" value="Reactome"/>
</dbReference>
<dbReference type="GO" id="GO:0005654">
    <property type="term" value="C:nucleoplasm"/>
    <property type="evidence" value="ECO:0007669"/>
    <property type="project" value="Ensembl"/>
</dbReference>
<dbReference type="GO" id="GO:0022624">
    <property type="term" value="C:proteasome accessory complex"/>
    <property type="evidence" value="ECO:0000250"/>
    <property type="project" value="UniProtKB"/>
</dbReference>
<dbReference type="GO" id="GO:0008540">
    <property type="term" value="C:proteasome regulatory particle, base subcomplex"/>
    <property type="evidence" value="ECO:0000318"/>
    <property type="project" value="GO_Central"/>
</dbReference>
<dbReference type="GO" id="GO:0005524">
    <property type="term" value="F:ATP binding"/>
    <property type="evidence" value="ECO:0007669"/>
    <property type="project" value="UniProtKB-KW"/>
</dbReference>
<dbReference type="GO" id="GO:0016887">
    <property type="term" value="F:ATP hydrolysis activity"/>
    <property type="evidence" value="ECO:0007669"/>
    <property type="project" value="InterPro"/>
</dbReference>
<dbReference type="GO" id="GO:0036402">
    <property type="term" value="F:proteasome-activating activity"/>
    <property type="evidence" value="ECO:0000318"/>
    <property type="project" value="GO_Central"/>
</dbReference>
<dbReference type="GO" id="GO:0043161">
    <property type="term" value="P:proteasome-mediated ubiquitin-dependent protein catabolic process"/>
    <property type="evidence" value="ECO:0000318"/>
    <property type="project" value="GO_Central"/>
</dbReference>
<dbReference type="CDD" id="cd19502">
    <property type="entry name" value="RecA-like_PAN_like"/>
    <property type="match status" value="1"/>
</dbReference>
<dbReference type="FunFam" id="1.10.8.60:FF:000018">
    <property type="entry name" value="26S protease regulatory subunit 6B"/>
    <property type="match status" value="1"/>
</dbReference>
<dbReference type="FunFam" id="2.40.50.140:FF:000046">
    <property type="entry name" value="26S protease regulatory subunit 6B"/>
    <property type="match status" value="1"/>
</dbReference>
<dbReference type="FunFam" id="3.40.50.300:FF:000033">
    <property type="entry name" value="26S protease regulatory subunit 6B"/>
    <property type="match status" value="1"/>
</dbReference>
<dbReference type="Gene3D" id="1.10.8.60">
    <property type="match status" value="1"/>
</dbReference>
<dbReference type="Gene3D" id="2.40.50.140">
    <property type="entry name" value="Nucleic acid-binding proteins"/>
    <property type="match status" value="1"/>
</dbReference>
<dbReference type="Gene3D" id="3.40.50.300">
    <property type="entry name" value="P-loop containing nucleotide triphosphate hydrolases"/>
    <property type="match status" value="1"/>
</dbReference>
<dbReference type="InterPro" id="IPR050221">
    <property type="entry name" value="26S_Proteasome_ATPase"/>
</dbReference>
<dbReference type="InterPro" id="IPR003593">
    <property type="entry name" value="AAA+_ATPase"/>
</dbReference>
<dbReference type="InterPro" id="IPR041569">
    <property type="entry name" value="AAA_lid_3"/>
</dbReference>
<dbReference type="InterPro" id="IPR003959">
    <property type="entry name" value="ATPase_AAA_core"/>
</dbReference>
<dbReference type="InterPro" id="IPR003960">
    <property type="entry name" value="ATPase_AAA_CS"/>
</dbReference>
<dbReference type="InterPro" id="IPR012340">
    <property type="entry name" value="NA-bd_OB-fold"/>
</dbReference>
<dbReference type="InterPro" id="IPR027417">
    <property type="entry name" value="P-loop_NTPase"/>
</dbReference>
<dbReference type="InterPro" id="IPR032501">
    <property type="entry name" value="Prot_ATP_ID_OB_2nd"/>
</dbReference>
<dbReference type="PANTHER" id="PTHR23073">
    <property type="entry name" value="26S PROTEASOME REGULATORY SUBUNIT"/>
    <property type="match status" value="1"/>
</dbReference>
<dbReference type="Pfam" id="PF00004">
    <property type="entry name" value="AAA"/>
    <property type="match status" value="1"/>
</dbReference>
<dbReference type="Pfam" id="PF17862">
    <property type="entry name" value="AAA_lid_3"/>
    <property type="match status" value="1"/>
</dbReference>
<dbReference type="Pfam" id="PF16450">
    <property type="entry name" value="Prot_ATP_ID_OB_C"/>
    <property type="match status" value="1"/>
</dbReference>
<dbReference type="SMART" id="SM00382">
    <property type="entry name" value="AAA"/>
    <property type="match status" value="1"/>
</dbReference>
<dbReference type="SUPFAM" id="SSF52540">
    <property type="entry name" value="P-loop containing nucleoside triphosphate hydrolases"/>
    <property type="match status" value="1"/>
</dbReference>
<dbReference type="PROSITE" id="PS00674">
    <property type="entry name" value="AAA"/>
    <property type="match status" value="1"/>
</dbReference>
<sequence>MEEIGILVEKAQDEIPALSVSRPQTGLSFLGPEPEDLEDLYSRYKKLQQELEFLEVQEEYIKDEQKNLKKEFLHAQEEVKRIQSIPLVIGQFLEAVDQNTAIVGSTTGSNYYVRILSTIDRELLKPNASVALHKHSNALVDVLPPEADSSIMMLTSDQKPDVMYADIGGMDIQKQEVREAVELPLTHFELYKQIGIDPPRGVLMYGPPGCGKTMLAKAVAHHTTAAFIRVVGSEFVQKYLGEGPRMVRDVFRLAKENAPAIIFIDEIDAIATKRFDAQTGADREVQRILLELLNQMDGFDQNVNVKVIMATNRADTLDPALLRPGRLDRKIEFPLPDRRQKRLIFSTITSKMNLSEEVDLEDYVARPDKISGADINSICQESGMLAVRENRYIVLAKDFEKAYKTVIKKDEQEHEFYK</sequence>
<proteinExistence type="evidence at transcript level"/>
<feature type="chain" id="PRO_0000249769" description="26S proteasome regulatory subunit 6B">
    <location>
        <begin position="1"/>
        <end position="418"/>
    </location>
</feature>
<feature type="binding site" evidence="2">
    <location>
        <begin position="206"/>
        <end position="213"/>
    </location>
    <ligand>
        <name>ATP</name>
        <dbReference type="ChEBI" id="CHEBI:30616"/>
    </ligand>
</feature>
<feature type="modified residue" description="N-acetylmethionine" evidence="1">
    <location>
        <position position="1"/>
    </location>
</feature>
<feature type="modified residue" description="Phosphoserine" evidence="1">
    <location>
        <position position="21"/>
    </location>
</feature>
<feature type="modified residue" description="Phosphothreonine" evidence="1">
    <location>
        <position position="25"/>
    </location>
</feature>
<feature type="modified residue" description="Phosphoserine" evidence="1">
    <location>
        <position position="28"/>
    </location>
</feature>
<feature type="modified residue" description="N6-acetyllysine" evidence="1">
    <location>
        <position position="397"/>
    </location>
</feature>
<feature type="modified residue" description="N6-acetyllysine" evidence="1">
    <location>
        <position position="401"/>
    </location>
</feature>
<organism>
    <name type="scientific">Bos taurus</name>
    <name type="common">Bovine</name>
    <dbReference type="NCBI Taxonomy" id="9913"/>
    <lineage>
        <taxon>Eukaryota</taxon>
        <taxon>Metazoa</taxon>
        <taxon>Chordata</taxon>
        <taxon>Craniata</taxon>
        <taxon>Vertebrata</taxon>
        <taxon>Euteleostomi</taxon>
        <taxon>Mammalia</taxon>
        <taxon>Eutheria</taxon>
        <taxon>Laurasiatheria</taxon>
        <taxon>Artiodactyla</taxon>
        <taxon>Ruminantia</taxon>
        <taxon>Pecora</taxon>
        <taxon>Bovidae</taxon>
        <taxon>Bovinae</taxon>
        <taxon>Bos</taxon>
    </lineage>
</organism>
<comment type="function">
    <text evidence="1">Component of the 26S proteasome, a multiprotein complex involved in the ATP-dependent degradation of ubiquitinated proteins. This complex plays a key role in the maintenance of protein homeostasis by removing misfolded or damaged proteins, which could impair cellular functions, and by removing proteins whose functions are no longer required. Therefore, the proteasome participates in numerous cellular processes, including cell cycle progression, apoptosis, or DNA damage repair. PSMC4 belongs to the heterohexameric ring of AAA (ATPases associated with diverse cellular activities) proteins that unfolds ubiquitinated target proteins that are concurrently translocated into a proteolytic chamber and degraded into peptides.</text>
</comment>
<comment type="subunit">
    <text evidence="1">Component of the 19S proteasome regulatory particle complex. The 26S proteasome consists of a 20S core particle (CP) and two 19S regulatory subunits (RP). The regulatory particle is made of a lid composed of 9 subunits, a base containing 6 ATPases including PSMC4 and few additional components. Interacts with NR1I3. Interacts with PAAF1. Interacts with TRIM5. Interacts with ZFAND1 (By similarity).</text>
</comment>
<comment type="subcellular location">
    <subcellularLocation>
        <location evidence="1">Cytoplasm</location>
    </subcellularLocation>
    <subcellularLocation>
        <location evidence="1">Nucleus</location>
    </subcellularLocation>
</comment>
<comment type="similarity">
    <text evidence="3">Belongs to the AAA ATPase family.</text>
</comment>
<protein>
    <recommendedName>
        <fullName>26S proteasome regulatory subunit 6B</fullName>
    </recommendedName>
    <alternativeName>
        <fullName>26S proteasome AAA-ATPase subunit RPT3</fullName>
    </alternativeName>
    <alternativeName>
        <fullName>Proteasome 26S subunit ATPase 4</fullName>
    </alternativeName>
</protein>
<evidence type="ECO:0000250" key="1">
    <source>
        <dbReference type="UniProtKB" id="P43686"/>
    </source>
</evidence>
<evidence type="ECO:0000255" key="2"/>
<evidence type="ECO:0000305" key="3"/>
<name>PRS6B_BOVIN</name>
<accession>Q3T030</accession>